<protein>
    <recommendedName>
        <fullName evidence="1">Large ribosomal subunit protein uL3</fullName>
    </recommendedName>
    <alternativeName>
        <fullName evidence="3">50S ribosomal protein L3</fullName>
    </alternativeName>
</protein>
<name>RL3_BACCR</name>
<organism>
    <name type="scientific">Bacillus cereus (strain ATCC 14579 / DSM 31 / CCUG 7414 / JCM 2152 / NBRC 15305 / NCIMB 9373 / NCTC 2599 / NRRL B-3711)</name>
    <dbReference type="NCBI Taxonomy" id="226900"/>
    <lineage>
        <taxon>Bacteria</taxon>
        <taxon>Bacillati</taxon>
        <taxon>Bacillota</taxon>
        <taxon>Bacilli</taxon>
        <taxon>Bacillales</taxon>
        <taxon>Bacillaceae</taxon>
        <taxon>Bacillus</taxon>
        <taxon>Bacillus cereus group</taxon>
    </lineage>
</organism>
<keyword id="KW-1185">Reference proteome</keyword>
<keyword id="KW-0687">Ribonucleoprotein</keyword>
<keyword id="KW-0689">Ribosomal protein</keyword>
<keyword id="KW-0694">RNA-binding</keyword>
<keyword id="KW-0699">rRNA-binding</keyword>
<reference key="1">
    <citation type="journal article" date="2003" name="Nature">
        <title>Genome sequence of Bacillus cereus and comparative analysis with Bacillus anthracis.</title>
        <authorList>
            <person name="Ivanova N."/>
            <person name="Sorokin A."/>
            <person name="Anderson I."/>
            <person name="Galleron N."/>
            <person name="Candelon B."/>
            <person name="Kapatral V."/>
            <person name="Bhattacharyya A."/>
            <person name="Reznik G."/>
            <person name="Mikhailova N."/>
            <person name="Lapidus A."/>
            <person name="Chu L."/>
            <person name="Mazur M."/>
            <person name="Goltsman E."/>
            <person name="Larsen N."/>
            <person name="D'Souza M."/>
            <person name="Walunas T."/>
            <person name="Grechkin Y."/>
            <person name="Pusch G."/>
            <person name="Haselkorn R."/>
            <person name="Fonstein M."/>
            <person name="Ehrlich S.D."/>
            <person name="Overbeek R."/>
            <person name="Kyrpides N.C."/>
        </authorList>
    </citation>
    <scope>NUCLEOTIDE SEQUENCE [LARGE SCALE GENOMIC DNA]</scope>
    <source>
        <strain>ATCC 14579 / DSM 31 / CCUG 7414 / JCM 2152 / NBRC 15305 / NCIMB 9373 / NCTC 2599 / NRRL B-3711</strain>
    </source>
</reference>
<evidence type="ECO:0000255" key="1">
    <source>
        <dbReference type="HAMAP-Rule" id="MF_01325"/>
    </source>
</evidence>
<evidence type="ECO:0000256" key="2">
    <source>
        <dbReference type="SAM" id="MobiDB-lite"/>
    </source>
</evidence>
<evidence type="ECO:0000305" key="3"/>
<proteinExistence type="inferred from homology"/>
<dbReference type="EMBL" id="AE016877">
    <property type="protein sequence ID" value="AAP07212.1"/>
    <property type="molecule type" value="Genomic_DNA"/>
</dbReference>
<dbReference type="RefSeq" id="NP_830011.1">
    <property type="nucleotide sequence ID" value="NC_004722.1"/>
</dbReference>
<dbReference type="RefSeq" id="WP_000160208.1">
    <property type="nucleotide sequence ID" value="NC_004722.1"/>
</dbReference>
<dbReference type="SMR" id="Q81J42"/>
<dbReference type="STRING" id="226900.BC_0131"/>
<dbReference type="MetOSite" id="Q81J42"/>
<dbReference type="KEGG" id="bce:BC0131"/>
<dbReference type="PATRIC" id="fig|226900.8.peg.132"/>
<dbReference type="HOGENOM" id="CLU_044142_4_1_9"/>
<dbReference type="Proteomes" id="UP000001417">
    <property type="component" value="Chromosome"/>
</dbReference>
<dbReference type="GO" id="GO:0022625">
    <property type="term" value="C:cytosolic large ribosomal subunit"/>
    <property type="evidence" value="ECO:0000318"/>
    <property type="project" value="GO_Central"/>
</dbReference>
<dbReference type="GO" id="GO:0019843">
    <property type="term" value="F:rRNA binding"/>
    <property type="evidence" value="ECO:0007669"/>
    <property type="project" value="UniProtKB-UniRule"/>
</dbReference>
<dbReference type="GO" id="GO:0003735">
    <property type="term" value="F:structural constituent of ribosome"/>
    <property type="evidence" value="ECO:0000318"/>
    <property type="project" value="GO_Central"/>
</dbReference>
<dbReference type="GO" id="GO:0006412">
    <property type="term" value="P:translation"/>
    <property type="evidence" value="ECO:0007669"/>
    <property type="project" value="UniProtKB-UniRule"/>
</dbReference>
<dbReference type="FunFam" id="2.40.30.10:FF:000004">
    <property type="entry name" value="50S ribosomal protein L3"/>
    <property type="match status" value="1"/>
</dbReference>
<dbReference type="FunFam" id="3.30.160.810:FF:000002">
    <property type="entry name" value="50S ribosomal protein L3"/>
    <property type="match status" value="1"/>
</dbReference>
<dbReference type="Gene3D" id="3.30.160.810">
    <property type="match status" value="1"/>
</dbReference>
<dbReference type="Gene3D" id="2.40.30.10">
    <property type="entry name" value="Translation factors"/>
    <property type="match status" value="1"/>
</dbReference>
<dbReference type="HAMAP" id="MF_01325_B">
    <property type="entry name" value="Ribosomal_uL3_B"/>
    <property type="match status" value="1"/>
</dbReference>
<dbReference type="InterPro" id="IPR000597">
    <property type="entry name" value="Ribosomal_uL3"/>
</dbReference>
<dbReference type="InterPro" id="IPR019927">
    <property type="entry name" value="Ribosomal_uL3_bac/org-type"/>
</dbReference>
<dbReference type="InterPro" id="IPR019926">
    <property type="entry name" value="Ribosomal_uL3_CS"/>
</dbReference>
<dbReference type="InterPro" id="IPR009000">
    <property type="entry name" value="Transl_B-barrel_sf"/>
</dbReference>
<dbReference type="NCBIfam" id="TIGR03625">
    <property type="entry name" value="L3_bact"/>
    <property type="match status" value="1"/>
</dbReference>
<dbReference type="PANTHER" id="PTHR11229">
    <property type="entry name" value="50S RIBOSOMAL PROTEIN L3"/>
    <property type="match status" value="1"/>
</dbReference>
<dbReference type="PANTHER" id="PTHR11229:SF16">
    <property type="entry name" value="LARGE RIBOSOMAL SUBUNIT PROTEIN UL3C"/>
    <property type="match status" value="1"/>
</dbReference>
<dbReference type="Pfam" id="PF00297">
    <property type="entry name" value="Ribosomal_L3"/>
    <property type="match status" value="1"/>
</dbReference>
<dbReference type="SUPFAM" id="SSF50447">
    <property type="entry name" value="Translation proteins"/>
    <property type="match status" value="1"/>
</dbReference>
<dbReference type="PROSITE" id="PS00474">
    <property type="entry name" value="RIBOSOMAL_L3"/>
    <property type="match status" value="1"/>
</dbReference>
<feature type="chain" id="PRO_0000077063" description="Large ribosomal subunit protein uL3">
    <location>
        <begin position="1"/>
        <end position="210"/>
    </location>
</feature>
<feature type="region of interest" description="Disordered" evidence="2">
    <location>
        <begin position="125"/>
        <end position="151"/>
    </location>
</feature>
<gene>
    <name evidence="1" type="primary">rplC</name>
    <name type="ordered locus">BC_0131</name>
</gene>
<sequence>MTKGILGRKIGMTQVFAENGELIPVTVIAANPNVVLQKKTTETDGYNAIQLGFEDKREKLTNKPEQGHTAKASTTPKRFIREIRDADVDGLEVGQEVKVDVFATGEIVDVTGISKGKGFQGVIKRHGQSRGPMSHGSRYHRRPGSMGPVAPNRVFKGKKLAGRMGGDQVTIQNLEIVQVDTERNLLLVKGNVPGAKKSLVVVQGAVKVTQ</sequence>
<comment type="function">
    <text evidence="1">One of the primary rRNA binding proteins, it binds directly near the 3'-end of the 23S rRNA, where it nucleates assembly of the 50S subunit.</text>
</comment>
<comment type="subunit">
    <text evidence="1">Part of the 50S ribosomal subunit. Forms a cluster with proteins L14 and L19.</text>
</comment>
<comment type="similarity">
    <text evidence="1">Belongs to the universal ribosomal protein uL3 family.</text>
</comment>
<accession>Q81J42</accession>